<gene>
    <name evidence="1" type="primary">idi</name>
    <name type="ordered locus">CMS2609</name>
</gene>
<accession>B0RIB7</accession>
<organism>
    <name type="scientific">Clavibacter sepedonicus</name>
    <name type="common">Clavibacter michiganensis subsp. sepedonicus</name>
    <dbReference type="NCBI Taxonomy" id="31964"/>
    <lineage>
        <taxon>Bacteria</taxon>
        <taxon>Bacillati</taxon>
        <taxon>Actinomycetota</taxon>
        <taxon>Actinomycetes</taxon>
        <taxon>Micrococcales</taxon>
        <taxon>Microbacteriaceae</taxon>
        <taxon>Clavibacter</taxon>
    </lineage>
</organism>
<sequence length="190" mass="20780">MPQHTELVVLLDDDGETIGTAPKATVHTRDTALHLAFSCHVFDAEGRILVTRRAIGKLTWPGVWTNSFCGHPAPDEDMLEAVHRRAEQELGLTLESVELVLPDFRYRATDAAGVVENEICPVFRAVAATPVDPRPEEVGEYQWVDPEQLIPAVAHTPWAFSPWLTLQLPLLYPEHAAHAGLADAAAVPAA</sequence>
<dbReference type="EC" id="5.3.3.2" evidence="1"/>
<dbReference type="EMBL" id="AM849034">
    <property type="protein sequence ID" value="CAQ02688.1"/>
    <property type="molecule type" value="Genomic_DNA"/>
</dbReference>
<dbReference type="RefSeq" id="WP_012299869.1">
    <property type="nucleotide sequence ID" value="NZ_MZMN01000003.1"/>
</dbReference>
<dbReference type="SMR" id="B0RIB7"/>
<dbReference type="STRING" id="31964.CMS2609"/>
<dbReference type="KEGG" id="cms:CMS2609"/>
<dbReference type="eggNOG" id="COG1443">
    <property type="taxonomic scope" value="Bacteria"/>
</dbReference>
<dbReference type="HOGENOM" id="CLU_060552_2_0_11"/>
<dbReference type="OrthoDB" id="9809458at2"/>
<dbReference type="UniPathway" id="UPA00059">
    <property type="reaction ID" value="UER00104"/>
</dbReference>
<dbReference type="Proteomes" id="UP000001318">
    <property type="component" value="Chromosome"/>
</dbReference>
<dbReference type="GO" id="GO:0005737">
    <property type="term" value="C:cytoplasm"/>
    <property type="evidence" value="ECO:0007669"/>
    <property type="project" value="UniProtKB-SubCell"/>
</dbReference>
<dbReference type="GO" id="GO:0004452">
    <property type="term" value="F:isopentenyl-diphosphate delta-isomerase activity"/>
    <property type="evidence" value="ECO:0007669"/>
    <property type="project" value="UniProtKB-UniRule"/>
</dbReference>
<dbReference type="GO" id="GO:0046872">
    <property type="term" value="F:metal ion binding"/>
    <property type="evidence" value="ECO:0007669"/>
    <property type="project" value="UniProtKB-KW"/>
</dbReference>
<dbReference type="GO" id="GO:0050992">
    <property type="term" value="P:dimethylallyl diphosphate biosynthetic process"/>
    <property type="evidence" value="ECO:0007669"/>
    <property type="project" value="UniProtKB-UniRule"/>
</dbReference>
<dbReference type="GO" id="GO:0008299">
    <property type="term" value="P:isoprenoid biosynthetic process"/>
    <property type="evidence" value="ECO:0007669"/>
    <property type="project" value="UniProtKB-KW"/>
</dbReference>
<dbReference type="CDD" id="cd02885">
    <property type="entry name" value="NUDIX_IPP_Isomerase"/>
    <property type="match status" value="1"/>
</dbReference>
<dbReference type="FunFam" id="3.90.79.10:FF:000009">
    <property type="entry name" value="Isopentenyl-diphosphate Delta-isomerase"/>
    <property type="match status" value="1"/>
</dbReference>
<dbReference type="Gene3D" id="3.90.79.10">
    <property type="entry name" value="Nucleoside Triphosphate Pyrophosphohydrolase"/>
    <property type="match status" value="1"/>
</dbReference>
<dbReference type="HAMAP" id="MF_00202">
    <property type="entry name" value="Idi"/>
    <property type="match status" value="1"/>
</dbReference>
<dbReference type="InterPro" id="IPR056375">
    <property type="entry name" value="Idi_bact"/>
</dbReference>
<dbReference type="InterPro" id="IPR011876">
    <property type="entry name" value="IsopentenylPP_isomerase_typ1"/>
</dbReference>
<dbReference type="InterPro" id="IPR015797">
    <property type="entry name" value="NUDIX_hydrolase-like_dom_sf"/>
</dbReference>
<dbReference type="InterPro" id="IPR000086">
    <property type="entry name" value="NUDIX_hydrolase_dom"/>
</dbReference>
<dbReference type="NCBIfam" id="TIGR02150">
    <property type="entry name" value="IPP_isom_1"/>
    <property type="match status" value="1"/>
</dbReference>
<dbReference type="NCBIfam" id="NF002995">
    <property type="entry name" value="PRK03759.1"/>
    <property type="match status" value="1"/>
</dbReference>
<dbReference type="PANTHER" id="PTHR10885">
    <property type="entry name" value="ISOPENTENYL-DIPHOSPHATE DELTA-ISOMERASE"/>
    <property type="match status" value="1"/>
</dbReference>
<dbReference type="PANTHER" id="PTHR10885:SF0">
    <property type="entry name" value="ISOPENTENYL-DIPHOSPHATE DELTA-ISOMERASE"/>
    <property type="match status" value="1"/>
</dbReference>
<dbReference type="Pfam" id="PF00293">
    <property type="entry name" value="NUDIX"/>
    <property type="match status" value="1"/>
</dbReference>
<dbReference type="PIRSF" id="PIRSF018427">
    <property type="entry name" value="Isopntndiph_ism"/>
    <property type="match status" value="1"/>
</dbReference>
<dbReference type="SUPFAM" id="SSF55811">
    <property type="entry name" value="Nudix"/>
    <property type="match status" value="1"/>
</dbReference>
<dbReference type="PROSITE" id="PS51462">
    <property type="entry name" value="NUDIX"/>
    <property type="match status" value="1"/>
</dbReference>
<proteinExistence type="inferred from homology"/>
<protein>
    <recommendedName>
        <fullName evidence="1">Isopentenyl-diphosphate Delta-isomerase</fullName>
        <shortName evidence="1">IPP isomerase</shortName>
        <ecNumber evidence="1">5.3.3.2</ecNumber>
    </recommendedName>
    <alternativeName>
        <fullName evidence="1">IPP:DMAPP isomerase</fullName>
    </alternativeName>
    <alternativeName>
        <fullName evidence="1">Isopentenyl pyrophosphate isomerase</fullName>
    </alternativeName>
</protein>
<feature type="chain" id="PRO_1000077740" description="Isopentenyl-diphosphate Delta-isomerase">
    <location>
        <begin position="1"/>
        <end position="190"/>
    </location>
</feature>
<feature type="domain" description="Nudix hydrolase">
    <location>
        <begin position="32"/>
        <end position="166"/>
    </location>
</feature>
<feature type="active site" evidence="1">
    <location>
        <position position="69"/>
    </location>
</feature>
<feature type="active site" evidence="1">
    <location>
        <position position="118"/>
    </location>
</feature>
<feature type="binding site" evidence="1">
    <location>
        <position position="27"/>
    </location>
    <ligand>
        <name>Mn(2+)</name>
        <dbReference type="ChEBI" id="CHEBI:29035"/>
    </ligand>
</feature>
<feature type="binding site" evidence="1">
    <location>
        <position position="34"/>
    </location>
    <ligand>
        <name>Mn(2+)</name>
        <dbReference type="ChEBI" id="CHEBI:29035"/>
    </ligand>
</feature>
<feature type="binding site" evidence="1">
    <location>
        <position position="71"/>
    </location>
    <ligand>
        <name>Mn(2+)</name>
        <dbReference type="ChEBI" id="CHEBI:29035"/>
    </ligand>
</feature>
<feature type="binding site" evidence="1">
    <location>
        <position position="89"/>
    </location>
    <ligand>
        <name>Mg(2+)</name>
        <dbReference type="ChEBI" id="CHEBI:18420"/>
    </ligand>
</feature>
<feature type="binding site" evidence="1">
    <location>
        <position position="116"/>
    </location>
    <ligand>
        <name>Mn(2+)</name>
        <dbReference type="ChEBI" id="CHEBI:29035"/>
    </ligand>
</feature>
<feature type="binding site" evidence="1">
    <location>
        <position position="118"/>
    </location>
    <ligand>
        <name>Mn(2+)</name>
        <dbReference type="ChEBI" id="CHEBI:29035"/>
    </ligand>
</feature>
<reference key="1">
    <citation type="journal article" date="2008" name="J. Bacteriol.">
        <title>Genome of the actinomycete plant pathogen Clavibacter michiganensis subsp. sepedonicus suggests recent niche adaptation.</title>
        <authorList>
            <person name="Bentley S.D."/>
            <person name="Corton C."/>
            <person name="Brown S.E."/>
            <person name="Barron A."/>
            <person name="Clark L."/>
            <person name="Doggett J."/>
            <person name="Harris B."/>
            <person name="Ormond D."/>
            <person name="Quail M.A."/>
            <person name="May G."/>
            <person name="Francis D."/>
            <person name="Knudson D."/>
            <person name="Parkhill J."/>
            <person name="Ishimaru C.A."/>
        </authorList>
    </citation>
    <scope>NUCLEOTIDE SEQUENCE [LARGE SCALE GENOMIC DNA]</scope>
    <source>
        <strain>ATCC 33113 / DSM 20744 / JCM 9667 / LMG 2889 / ICMP 2535 / C-1</strain>
    </source>
</reference>
<comment type="function">
    <text evidence="1">Catalyzes the 1,3-allylic rearrangement of the homoallylic substrate isopentenyl (IPP) to its highly electrophilic allylic isomer, dimethylallyl diphosphate (DMAPP).</text>
</comment>
<comment type="catalytic activity">
    <reaction evidence="1">
        <text>isopentenyl diphosphate = dimethylallyl diphosphate</text>
        <dbReference type="Rhea" id="RHEA:23284"/>
        <dbReference type="ChEBI" id="CHEBI:57623"/>
        <dbReference type="ChEBI" id="CHEBI:128769"/>
        <dbReference type="EC" id="5.3.3.2"/>
    </reaction>
</comment>
<comment type="cofactor">
    <cofactor evidence="1">
        <name>Mg(2+)</name>
        <dbReference type="ChEBI" id="CHEBI:18420"/>
    </cofactor>
    <text evidence="1">Binds 1 Mg(2+) ion per subunit. The magnesium ion binds only when substrate is bound.</text>
</comment>
<comment type="cofactor">
    <cofactor evidence="1">
        <name>Mn(2+)</name>
        <dbReference type="ChEBI" id="CHEBI:29035"/>
    </cofactor>
    <text evidence="1">Binds 1 Mn(2+) ion per subunit.</text>
</comment>
<comment type="pathway">
    <text evidence="1">Isoprenoid biosynthesis; dimethylallyl diphosphate biosynthesis; dimethylallyl diphosphate from isopentenyl diphosphate: step 1/1.</text>
</comment>
<comment type="subcellular location">
    <subcellularLocation>
        <location evidence="1">Cytoplasm</location>
    </subcellularLocation>
</comment>
<comment type="similarity">
    <text evidence="1">Belongs to the IPP isomerase type 1 family.</text>
</comment>
<name>IDI_CLASE</name>
<evidence type="ECO:0000255" key="1">
    <source>
        <dbReference type="HAMAP-Rule" id="MF_00202"/>
    </source>
</evidence>
<keyword id="KW-0963">Cytoplasm</keyword>
<keyword id="KW-0413">Isomerase</keyword>
<keyword id="KW-0414">Isoprene biosynthesis</keyword>
<keyword id="KW-0460">Magnesium</keyword>
<keyword id="KW-0464">Manganese</keyword>
<keyword id="KW-0479">Metal-binding</keyword>